<feature type="chain" id="PRO_0000279630" description="Polymerase basic protein 2">
    <location>
        <begin position="1"/>
        <end position="759"/>
    </location>
</feature>
<feature type="short sequence motif" description="Nuclear localization signal" evidence="1">
    <location>
        <begin position="736"/>
        <end position="739"/>
    </location>
</feature>
<feature type="site" description="Mammalian adaptation" evidence="1">
    <location>
        <position position="627"/>
    </location>
</feature>
<organism>
    <name type="scientific">Influenza A virus (strain A/England/878/1969 H3N2)</name>
    <dbReference type="NCBI Taxonomy" id="387147"/>
    <lineage>
        <taxon>Viruses</taxon>
        <taxon>Riboviria</taxon>
        <taxon>Orthornavirae</taxon>
        <taxon>Negarnaviricota</taxon>
        <taxon>Polyploviricotina</taxon>
        <taxon>Insthoviricetes</taxon>
        <taxon>Articulavirales</taxon>
        <taxon>Orthomyxoviridae</taxon>
        <taxon>Alphainfluenzavirus</taxon>
        <taxon>Alphainfluenzavirus influenzae</taxon>
        <taxon>Influenza A virus</taxon>
    </lineage>
</organism>
<comment type="function">
    <text evidence="1">Plays an essential role in transcription initiation and cap-stealing mechanism, in which cellular capped pre-mRNAs are used to generate primers for viral transcription. Recognizes and binds the 7-methylguanosine-containing cap of the target pre-RNA which is subsequently cleaved after 10-13 nucleotides by the viral protein PA. Plays a role in the initiation of the viral genome replication and modulates the activity of the ribonucleoprotein (RNP) complex. In addition, participates in the inhibition of type I interferon induction through interaction with and inhibition of the host mitochondrial antiviral signaling protein MAVS.</text>
</comment>
<comment type="subunit">
    <text evidence="1">Influenza RNA polymerase is composed of three subunits: PB1, PB2 and PA. Interacts (via N-terminus) with PB1 (via C-terminus). Interacts with nucleoprotein NP (via N-terminus). Interacts (via N-terminus) with host MAVS (via N-terminus); this interaction inhibits host innate immune response.</text>
</comment>
<comment type="subcellular location">
    <subcellularLocation>
        <location evidence="1">Virion</location>
    </subcellularLocation>
    <subcellularLocation>
        <location evidence="1">Host nucleus</location>
    </subcellularLocation>
    <subcellularLocation>
        <location evidence="1">Host mitochondrion</location>
    </subcellularLocation>
</comment>
<comment type="similarity">
    <text evidence="1">Belongs to the influenza viruses PB2 family.</text>
</comment>
<accession>Q6XTL0</accession>
<organismHost>
    <name type="scientific">Aves</name>
    <dbReference type="NCBI Taxonomy" id="8782"/>
</organismHost>
<organismHost>
    <name type="scientific">Homo sapiens</name>
    <name type="common">Human</name>
    <dbReference type="NCBI Taxonomy" id="9606"/>
</organismHost>
<organismHost>
    <name type="scientific">Mysticeti</name>
    <name type="common">baleen whales</name>
    <dbReference type="NCBI Taxonomy" id="9761"/>
</organismHost>
<organismHost>
    <name type="scientific">Phocidae</name>
    <name type="common">true seals</name>
    <dbReference type="NCBI Taxonomy" id="9709"/>
</organismHost>
<organismHost>
    <name type="scientific">Sus scrofa</name>
    <name type="common">Pig</name>
    <dbReference type="NCBI Taxonomy" id="9823"/>
</organismHost>
<evidence type="ECO:0000255" key="1">
    <source>
        <dbReference type="HAMAP-Rule" id="MF_04062"/>
    </source>
</evidence>
<gene>
    <name evidence="1" type="primary">PB2</name>
</gene>
<keyword id="KW-1157">Cap snatching</keyword>
<keyword id="KW-1262">Eukaryotic host gene expression shutoff by virus</keyword>
<keyword id="KW-1191">Eukaryotic host transcription shutoff by virus</keyword>
<keyword id="KW-1190">Host gene expression shutoff by virus</keyword>
<keyword id="KW-1045">Host mitochondrion</keyword>
<keyword id="KW-1048">Host nucleus</keyword>
<keyword id="KW-0945">Host-virus interaction</keyword>
<keyword id="KW-1090">Inhibition of host innate immune response by virus</keyword>
<keyword id="KW-1097">Inhibition of host MAVS by virus</keyword>
<keyword id="KW-1113">Inhibition of host RLR pathway by virus</keyword>
<keyword id="KW-1104">Inhibition of host RNA polymerase II by virus</keyword>
<keyword id="KW-0506">mRNA capping</keyword>
<keyword id="KW-0507">mRNA processing</keyword>
<keyword id="KW-0899">Viral immunoevasion</keyword>
<keyword id="KW-1195">Viral transcription</keyword>
<keyword id="KW-0946">Virion</keyword>
<sequence>MERIKELRNLMSQSRTREILTKTTVDHMAIIKKYTSGRQEKNPSLRMKWMMAMKYPITADKRITEMVPERNEQGQTLWSKMSDAGSDRVMVSPLAVTWWNRNGPMTSTVHYPKVYKTYFEKVERLKHGTFGPVHFRNQVKIRRRVDINPGHADLSAKEAQDVIMEVVFPNEVGARILTSESQLTITKEKKEELQDCKISPLMVAYMLERELVRKTRFLPVAGGTSSVYIEVLHLTQGTCWEQMYTPGGEVRNDDIDQSLIIAARNIVRRAAVSADPLASLLEMCHSTQIGGTRMVDILRQNPTEEQAVDICKAAMGLRISSSFSFGGFTFKRTSGSSIKREEELLTGNLQTLKIRVHEGYEEFTMVGKRATAILRKATRRLVQLIVSGRDEQSVAEAIIVAMVFSQEDCMIKAVRGDLNFVNRANQRLNPMHQLLRHFQKDAKVLFQNWGIEHIDNVMGMIGVLPDMTPSTEMSMRGIRVSKMGVDEYSSTERVVVSIDRFLRVRDQRGNVLLSPEEVSETQGTEKLTITYSSSMMWEINGPESVLVNTYQWIIRNWETVKIQWSQNPTMLYNKMEFEPFQSLVPKAIRGQYSGFVRTLFQQMRDVLGTFDTTQIIKLLPFAAAPPKQSRMQFSSLTVNVRGSGMRILVRGNSPVFNYNKTTKRLTILGKDAGTLIEDPDEGTSGVESAVLRGFLILGKEDRRYGPALSINELSNLAKGEKANVLIGQGDVVLVMKRKRDSSILTDSQTATKRIRMAIN</sequence>
<dbReference type="EMBL" id="AY210142">
    <property type="protein sequence ID" value="AAO46498.1"/>
    <property type="molecule type" value="Genomic_RNA"/>
</dbReference>
<dbReference type="SMR" id="Q6XTL0"/>
<dbReference type="GO" id="GO:0033650">
    <property type="term" value="C:host cell mitochondrion"/>
    <property type="evidence" value="ECO:0007669"/>
    <property type="project" value="UniProtKB-SubCell"/>
</dbReference>
<dbReference type="GO" id="GO:0042025">
    <property type="term" value="C:host cell nucleus"/>
    <property type="evidence" value="ECO:0007669"/>
    <property type="project" value="UniProtKB-SubCell"/>
</dbReference>
<dbReference type="GO" id="GO:0044423">
    <property type="term" value="C:virion component"/>
    <property type="evidence" value="ECO:0007669"/>
    <property type="project" value="UniProtKB-UniRule"/>
</dbReference>
<dbReference type="GO" id="GO:0003723">
    <property type="term" value="F:RNA binding"/>
    <property type="evidence" value="ECO:0007669"/>
    <property type="project" value="UniProtKB-UniRule"/>
</dbReference>
<dbReference type="GO" id="GO:0003968">
    <property type="term" value="F:RNA-directed RNA polymerase activity"/>
    <property type="evidence" value="ECO:0007669"/>
    <property type="project" value="UniProtKB-UniRule"/>
</dbReference>
<dbReference type="GO" id="GO:0006370">
    <property type="term" value="P:7-methylguanosine mRNA capping"/>
    <property type="evidence" value="ECO:0007669"/>
    <property type="project" value="UniProtKB-UniRule"/>
</dbReference>
<dbReference type="GO" id="GO:0075526">
    <property type="term" value="P:cap snatching"/>
    <property type="evidence" value="ECO:0007669"/>
    <property type="project" value="UniProtKB-UniRule"/>
</dbReference>
<dbReference type="GO" id="GO:0006351">
    <property type="term" value="P:DNA-templated transcription"/>
    <property type="evidence" value="ECO:0007669"/>
    <property type="project" value="UniProtKB-UniRule"/>
</dbReference>
<dbReference type="GO" id="GO:0039545">
    <property type="term" value="P:symbiont-mediated suppression of host cytoplasmic pattern recognition receptor signaling pathway via inhibition of MAVS activity"/>
    <property type="evidence" value="ECO:0007669"/>
    <property type="project" value="UniProtKB-UniRule"/>
</dbReference>
<dbReference type="GO" id="GO:0039657">
    <property type="term" value="P:symbiont-mediated suppression of host gene expression"/>
    <property type="evidence" value="ECO:0007669"/>
    <property type="project" value="UniProtKB-KW"/>
</dbReference>
<dbReference type="GO" id="GO:0039523">
    <property type="term" value="P:symbiont-mediated suppression of host mRNA transcription via inhibition of RNA polymerase II activity"/>
    <property type="evidence" value="ECO:0007669"/>
    <property type="project" value="UniProtKB-UniRule"/>
</dbReference>
<dbReference type="GO" id="GO:0039694">
    <property type="term" value="P:viral RNA genome replication"/>
    <property type="evidence" value="ECO:0007669"/>
    <property type="project" value="InterPro"/>
</dbReference>
<dbReference type="FunFam" id="3.30.30.90:FF:000001">
    <property type="entry name" value="Polymerase basic protein 2"/>
    <property type="match status" value="1"/>
</dbReference>
<dbReference type="Gene3D" id="3.30.30.90">
    <property type="entry name" value="Polymerase Basic Protein 2, C-terminal domain"/>
    <property type="match status" value="1"/>
</dbReference>
<dbReference type="HAMAP" id="MF_04062">
    <property type="entry name" value="INV_PB2"/>
    <property type="match status" value="1"/>
</dbReference>
<dbReference type="InterPro" id="IPR049110">
    <property type="entry name" value="Flu_PB2_2nd"/>
</dbReference>
<dbReference type="InterPro" id="IPR049114">
    <property type="entry name" value="Flu_PB2_6th"/>
</dbReference>
<dbReference type="InterPro" id="IPR049115">
    <property type="entry name" value="Flu_PB2_C"/>
</dbReference>
<dbReference type="InterPro" id="IPR048298">
    <property type="entry name" value="Flu_PB2_CAP-bd"/>
</dbReference>
<dbReference type="InterPro" id="IPR049111">
    <property type="entry name" value="Flu_PB2_middle"/>
</dbReference>
<dbReference type="InterPro" id="IPR049106">
    <property type="entry name" value="Flu_PB2_N"/>
</dbReference>
<dbReference type="InterPro" id="IPR001591">
    <property type="entry name" value="INV_PB2"/>
</dbReference>
<dbReference type="InterPro" id="IPR049113">
    <property type="entry name" value="PB2_helical"/>
</dbReference>
<dbReference type="InterPro" id="IPR037258">
    <property type="entry name" value="PDB2_C"/>
</dbReference>
<dbReference type="Pfam" id="PF20947">
    <property type="entry name" value="Flu_PB2_1st"/>
    <property type="match status" value="1"/>
</dbReference>
<dbReference type="Pfam" id="PF20948">
    <property type="entry name" value="Flu_PB2_2nd"/>
    <property type="match status" value="1"/>
</dbReference>
<dbReference type="Pfam" id="PF20949">
    <property type="entry name" value="Flu_PB2_3rd"/>
    <property type="match status" value="1"/>
</dbReference>
<dbReference type="Pfam" id="PF20950">
    <property type="entry name" value="Flu_PB2_4th"/>
    <property type="match status" value="1"/>
</dbReference>
<dbReference type="Pfam" id="PF00604">
    <property type="entry name" value="Flu_PB2_5th"/>
    <property type="match status" value="1"/>
</dbReference>
<dbReference type="Pfam" id="PF20951">
    <property type="entry name" value="Flu_PB2_6th"/>
    <property type="match status" value="1"/>
</dbReference>
<dbReference type="Pfam" id="PF20952">
    <property type="entry name" value="Flu_PB2_7th"/>
    <property type="match status" value="1"/>
</dbReference>
<dbReference type="SUPFAM" id="SSF160453">
    <property type="entry name" value="PB2 C-terminal domain-like"/>
    <property type="match status" value="1"/>
</dbReference>
<proteinExistence type="inferred from homology"/>
<protein>
    <recommendedName>
        <fullName evidence="1">Polymerase basic protein 2</fullName>
    </recommendedName>
    <alternativeName>
        <fullName evidence="1">RNA-directed RNA polymerase subunit P3</fullName>
    </alternativeName>
</protein>
<name>PB2_I69A0</name>
<reference key="1">
    <citation type="journal article" date="2004" name="Virology">
        <title>Genetic analysis of human H2N2 and early H3N2 influenza viruses, 1957-1972: evidence for genetic divergence and multiple reassortment events.</title>
        <authorList>
            <person name="Lindstrom S.E."/>
            <person name="Cox N.J."/>
            <person name="Klimov A."/>
        </authorList>
    </citation>
    <scope>NUCLEOTIDE SEQUENCE [GENOMIC RNA]</scope>
</reference>